<sequence>TAIGNCNPFTCDKECKTKGNKRGYCENYNCECSKW</sequence>
<accession>P0DQU5</accession>
<reference key="1">
    <citation type="journal article" date="2018" name="Toxicon">
        <title>Venom characterization of the Amazonian scorpion Tityus metuendus.</title>
        <authorList>
            <person name="Batista C.V.F."/>
            <person name="Martins J.G."/>
            <person name="Restano-Cassulini R."/>
            <person name="Coronas F.I.V."/>
            <person name="Zamudio F.Z."/>
            <person name="Procopio R."/>
            <person name="Possani L.D."/>
        </authorList>
    </citation>
    <scope>PROTEIN SEQUENCE</scope>
    <scope>MASS SPECTROMETRY</scope>
    <scope>SUBCELLULAR LOCATION</scope>
    <source>
        <tissue>Venom</tissue>
    </source>
</reference>
<organism>
    <name type="scientific">Tityus metuendus</name>
    <name type="common">Scorpion</name>
    <dbReference type="NCBI Taxonomy" id="2203750"/>
    <lineage>
        <taxon>Eukaryota</taxon>
        <taxon>Metazoa</taxon>
        <taxon>Ecdysozoa</taxon>
        <taxon>Arthropoda</taxon>
        <taxon>Chelicerata</taxon>
        <taxon>Arachnida</taxon>
        <taxon>Scorpiones</taxon>
        <taxon>Buthida</taxon>
        <taxon>Buthoidea</taxon>
        <taxon>Buthidae</taxon>
        <taxon>Tityus</taxon>
    </lineage>
</organism>
<feature type="chain" id="PRO_0000455693" description="Potassium channel toxin" evidence="3">
    <location>
        <begin position="1"/>
        <end position="35"/>
    </location>
</feature>
<feature type="disulfide bond" evidence="2">
    <location>
        <begin position="6"/>
        <end position="25"/>
    </location>
</feature>
<feature type="disulfide bond" evidence="2">
    <location>
        <begin position="11"/>
        <end position="30"/>
    </location>
</feature>
<feature type="disulfide bond" evidence="2">
    <location>
        <begin position="15"/>
        <end position="32"/>
    </location>
</feature>
<comment type="function">
    <text evidence="1">Toxin that blocks voltage-gated potassium channels (Kv).</text>
</comment>
<comment type="subcellular location">
    <subcellularLocation>
        <location evidence="3">Secreted</location>
    </subcellularLocation>
</comment>
<comment type="tissue specificity">
    <text evidence="5">Expressed by the venom gland.</text>
</comment>
<comment type="domain">
    <text evidence="1">Has the structural arrangement of an alpha-helix connected to antiparallel beta-sheets by disulfide bonds (CS-alpha/beta).</text>
</comment>
<comment type="mass spectrometry">
    <text>Average mass.</text>
</comment>
<comment type="similarity">
    <text evidence="4">Belongs to the short scorpion toxin superfamily. Potassium channel inhibitor family. Alpha-KTx 21 subfamily.</text>
</comment>
<protein>
    <recommendedName>
        <fullName evidence="4">Potassium channel toxin</fullName>
    </recommendedName>
</protein>
<keyword id="KW-0903">Direct protein sequencing</keyword>
<keyword id="KW-1015">Disulfide bond</keyword>
<keyword id="KW-0872">Ion channel impairing toxin</keyword>
<keyword id="KW-0528">Neurotoxin</keyword>
<keyword id="KW-0632">Potassium channel impairing toxin</keyword>
<keyword id="KW-0964">Secreted</keyword>
<keyword id="KW-0800">Toxin</keyword>
<keyword id="KW-1220">Voltage-gated potassium channel impairing toxin</keyword>
<evidence type="ECO:0000250" key="1">
    <source>
        <dbReference type="UniProtKB" id="P86270"/>
    </source>
</evidence>
<evidence type="ECO:0000250" key="2">
    <source>
        <dbReference type="UniProtKB" id="Q8I0L5"/>
    </source>
</evidence>
<evidence type="ECO:0000269" key="3">
    <source>
    </source>
</evidence>
<evidence type="ECO:0000305" key="4"/>
<evidence type="ECO:0000305" key="5">
    <source>
    </source>
</evidence>
<name>KA212_TITME</name>
<dbReference type="SMR" id="P0DQU5"/>
<dbReference type="GO" id="GO:0005576">
    <property type="term" value="C:extracellular region"/>
    <property type="evidence" value="ECO:0007669"/>
    <property type="project" value="UniProtKB-SubCell"/>
</dbReference>
<dbReference type="GO" id="GO:0015459">
    <property type="term" value="F:potassium channel regulator activity"/>
    <property type="evidence" value="ECO:0007669"/>
    <property type="project" value="UniProtKB-KW"/>
</dbReference>
<dbReference type="GO" id="GO:0090729">
    <property type="term" value="F:toxin activity"/>
    <property type="evidence" value="ECO:0007669"/>
    <property type="project" value="UniProtKB-KW"/>
</dbReference>
<dbReference type="InterPro" id="IPR036574">
    <property type="entry name" value="Scorpion_toxin-like_sf"/>
</dbReference>
<dbReference type="SUPFAM" id="SSF57095">
    <property type="entry name" value="Scorpion toxin-like"/>
    <property type="match status" value="1"/>
</dbReference>
<proteinExistence type="evidence at protein level"/>